<comment type="function">
    <text evidence="1">Catalyzes the decarboxylation of orotidine 5'-monophosphate (OMP) to uridine 5'-monophosphate (UMP).</text>
</comment>
<comment type="catalytic activity">
    <reaction evidence="1">
        <text>orotidine 5'-phosphate + H(+) = UMP + CO2</text>
        <dbReference type="Rhea" id="RHEA:11596"/>
        <dbReference type="ChEBI" id="CHEBI:15378"/>
        <dbReference type="ChEBI" id="CHEBI:16526"/>
        <dbReference type="ChEBI" id="CHEBI:57538"/>
        <dbReference type="ChEBI" id="CHEBI:57865"/>
        <dbReference type="EC" id="4.1.1.23"/>
    </reaction>
</comment>
<comment type="pathway">
    <text evidence="1">Pyrimidine metabolism; UMP biosynthesis via de novo pathway; UMP from orotate: step 2/2.</text>
</comment>
<comment type="subunit">
    <text evidence="1">Homodimer.</text>
</comment>
<comment type="similarity">
    <text evidence="1">Belongs to the OMP decarboxylase family. Type 1 subfamily.</text>
</comment>
<gene>
    <name evidence="1" type="primary">pyrF</name>
    <name type="ordered locus">PA14_26890</name>
</gene>
<keyword id="KW-0210">Decarboxylase</keyword>
<keyword id="KW-0456">Lyase</keyword>
<keyword id="KW-0665">Pyrimidine biosynthesis</keyword>
<sequence length="232" mass="24394">MSACQSPIIVALDFPTREAALALADQLDPKLCRVKVGKELFTSCAAGIVETLRGKGFEVFLDLKFHDIPNTTAMAVKAAAEMGVWMVNVHCSGGLRMMAACRETLEAFSGPRPLLIGVTVLTSMEREDLAGIGLDIEPQEQVLRLAALAQKAGMDGLVCSAQEAPALKAAHPGLQLVTPGIRPAGSAQDDQRRILTPRQALDAGSDYLVIGRPISQAADPAKALAAIVAELG</sequence>
<protein>
    <recommendedName>
        <fullName evidence="1">Orotidine 5'-phosphate decarboxylase</fullName>
        <ecNumber evidence="1">4.1.1.23</ecNumber>
    </recommendedName>
    <alternativeName>
        <fullName evidence="1">OMP decarboxylase</fullName>
        <shortName evidence="1">OMPDCase</shortName>
        <shortName evidence="1">OMPdecase</shortName>
    </alternativeName>
</protein>
<proteinExistence type="inferred from homology"/>
<feature type="chain" id="PRO_1000065933" description="Orotidine 5'-phosphate decarboxylase">
    <location>
        <begin position="1"/>
        <end position="232"/>
    </location>
</feature>
<feature type="active site" description="Proton donor" evidence="1">
    <location>
        <position position="64"/>
    </location>
</feature>
<feature type="binding site" evidence="1">
    <location>
        <position position="13"/>
    </location>
    <ligand>
        <name>substrate</name>
    </ligand>
</feature>
<feature type="binding site" evidence="1">
    <location>
        <position position="35"/>
    </location>
    <ligand>
        <name>substrate</name>
    </ligand>
</feature>
<feature type="binding site" evidence="1">
    <location>
        <begin position="62"/>
        <end position="71"/>
    </location>
    <ligand>
        <name>substrate</name>
    </ligand>
</feature>
<feature type="binding site" evidence="1">
    <location>
        <position position="122"/>
    </location>
    <ligand>
        <name>substrate</name>
    </ligand>
</feature>
<feature type="binding site" evidence="1">
    <location>
        <position position="182"/>
    </location>
    <ligand>
        <name>substrate</name>
    </ligand>
</feature>
<feature type="binding site" evidence="1">
    <location>
        <position position="191"/>
    </location>
    <ligand>
        <name>substrate</name>
    </ligand>
</feature>
<feature type="binding site" evidence="1">
    <location>
        <position position="211"/>
    </location>
    <ligand>
        <name>substrate</name>
    </ligand>
</feature>
<feature type="binding site" evidence="1">
    <location>
        <position position="212"/>
    </location>
    <ligand>
        <name>substrate</name>
    </ligand>
</feature>
<organism>
    <name type="scientific">Pseudomonas aeruginosa (strain UCBPP-PA14)</name>
    <dbReference type="NCBI Taxonomy" id="208963"/>
    <lineage>
        <taxon>Bacteria</taxon>
        <taxon>Pseudomonadati</taxon>
        <taxon>Pseudomonadota</taxon>
        <taxon>Gammaproteobacteria</taxon>
        <taxon>Pseudomonadales</taxon>
        <taxon>Pseudomonadaceae</taxon>
        <taxon>Pseudomonas</taxon>
    </lineage>
</organism>
<dbReference type="EC" id="4.1.1.23" evidence="1"/>
<dbReference type="EMBL" id="CP000438">
    <property type="protein sequence ID" value="ABJ12115.1"/>
    <property type="molecule type" value="Genomic_DNA"/>
</dbReference>
<dbReference type="RefSeq" id="WP_003090975.1">
    <property type="nucleotide sequence ID" value="NZ_CP034244.1"/>
</dbReference>
<dbReference type="SMR" id="Q02P38"/>
<dbReference type="KEGG" id="pau:PA14_26890"/>
<dbReference type="PseudoCAP" id="PA14_26890"/>
<dbReference type="HOGENOM" id="CLU_067069_0_0_6"/>
<dbReference type="BioCyc" id="PAER208963:G1G74-2236-MONOMER"/>
<dbReference type="UniPathway" id="UPA00070">
    <property type="reaction ID" value="UER00120"/>
</dbReference>
<dbReference type="Proteomes" id="UP000000653">
    <property type="component" value="Chromosome"/>
</dbReference>
<dbReference type="GO" id="GO:0005829">
    <property type="term" value="C:cytosol"/>
    <property type="evidence" value="ECO:0007669"/>
    <property type="project" value="TreeGrafter"/>
</dbReference>
<dbReference type="GO" id="GO:0004590">
    <property type="term" value="F:orotidine-5'-phosphate decarboxylase activity"/>
    <property type="evidence" value="ECO:0007669"/>
    <property type="project" value="UniProtKB-UniRule"/>
</dbReference>
<dbReference type="GO" id="GO:0006207">
    <property type="term" value="P:'de novo' pyrimidine nucleobase biosynthetic process"/>
    <property type="evidence" value="ECO:0007669"/>
    <property type="project" value="InterPro"/>
</dbReference>
<dbReference type="GO" id="GO:0044205">
    <property type="term" value="P:'de novo' UMP biosynthetic process"/>
    <property type="evidence" value="ECO:0007669"/>
    <property type="project" value="UniProtKB-UniRule"/>
</dbReference>
<dbReference type="CDD" id="cd04725">
    <property type="entry name" value="OMP_decarboxylase_like"/>
    <property type="match status" value="1"/>
</dbReference>
<dbReference type="FunFam" id="3.20.20.70:FF:000015">
    <property type="entry name" value="Orotidine 5'-phosphate decarboxylase"/>
    <property type="match status" value="1"/>
</dbReference>
<dbReference type="Gene3D" id="3.20.20.70">
    <property type="entry name" value="Aldolase class I"/>
    <property type="match status" value="1"/>
</dbReference>
<dbReference type="HAMAP" id="MF_01200_B">
    <property type="entry name" value="OMPdecase_type1_B"/>
    <property type="match status" value="1"/>
</dbReference>
<dbReference type="InterPro" id="IPR013785">
    <property type="entry name" value="Aldolase_TIM"/>
</dbReference>
<dbReference type="InterPro" id="IPR014732">
    <property type="entry name" value="OMPdecase"/>
</dbReference>
<dbReference type="InterPro" id="IPR018089">
    <property type="entry name" value="OMPdecase_AS"/>
</dbReference>
<dbReference type="InterPro" id="IPR047596">
    <property type="entry name" value="OMPdecase_bac"/>
</dbReference>
<dbReference type="InterPro" id="IPR001754">
    <property type="entry name" value="OMPdeCOase_dom"/>
</dbReference>
<dbReference type="InterPro" id="IPR011060">
    <property type="entry name" value="RibuloseP-bd_barrel"/>
</dbReference>
<dbReference type="NCBIfam" id="NF001273">
    <property type="entry name" value="PRK00230.1"/>
    <property type="match status" value="1"/>
</dbReference>
<dbReference type="NCBIfam" id="TIGR01740">
    <property type="entry name" value="pyrF"/>
    <property type="match status" value="1"/>
</dbReference>
<dbReference type="PANTHER" id="PTHR32119">
    <property type="entry name" value="OROTIDINE 5'-PHOSPHATE DECARBOXYLASE"/>
    <property type="match status" value="1"/>
</dbReference>
<dbReference type="PANTHER" id="PTHR32119:SF2">
    <property type="entry name" value="OROTIDINE 5'-PHOSPHATE DECARBOXYLASE"/>
    <property type="match status" value="1"/>
</dbReference>
<dbReference type="Pfam" id="PF00215">
    <property type="entry name" value="OMPdecase"/>
    <property type="match status" value="1"/>
</dbReference>
<dbReference type="SMART" id="SM00934">
    <property type="entry name" value="OMPdecase"/>
    <property type="match status" value="1"/>
</dbReference>
<dbReference type="SUPFAM" id="SSF51366">
    <property type="entry name" value="Ribulose-phoshate binding barrel"/>
    <property type="match status" value="1"/>
</dbReference>
<dbReference type="PROSITE" id="PS00156">
    <property type="entry name" value="OMPDECASE"/>
    <property type="match status" value="1"/>
</dbReference>
<reference key="1">
    <citation type="journal article" date="2006" name="Genome Biol.">
        <title>Genomic analysis reveals that Pseudomonas aeruginosa virulence is combinatorial.</title>
        <authorList>
            <person name="Lee D.G."/>
            <person name="Urbach J.M."/>
            <person name="Wu G."/>
            <person name="Liberati N.T."/>
            <person name="Feinbaum R.L."/>
            <person name="Miyata S."/>
            <person name="Diggins L.T."/>
            <person name="He J."/>
            <person name="Saucier M."/>
            <person name="Deziel E."/>
            <person name="Friedman L."/>
            <person name="Li L."/>
            <person name="Grills G."/>
            <person name="Montgomery K."/>
            <person name="Kucherlapati R."/>
            <person name="Rahme L.G."/>
            <person name="Ausubel F.M."/>
        </authorList>
    </citation>
    <scope>NUCLEOTIDE SEQUENCE [LARGE SCALE GENOMIC DNA]</scope>
    <source>
        <strain>UCBPP-PA14</strain>
    </source>
</reference>
<accession>Q02P38</accession>
<name>PYRF_PSEAB</name>
<evidence type="ECO:0000255" key="1">
    <source>
        <dbReference type="HAMAP-Rule" id="MF_01200"/>
    </source>
</evidence>